<feature type="signal peptide" evidence="2">
    <location>
        <begin position="1"/>
        <end position="19"/>
    </location>
</feature>
<feature type="chain" id="PRO_5000144855" description="External core antigen" evidence="2">
    <location>
        <begin position="20"/>
        <end position="212"/>
    </location>
</feature>
<feature type="propeptide" id="PRO_0000324736" evidence="1">
    <location>
        <begin position="184"/>
        <end position="212"/>
    </location>
</feature>
<feature type="repeat" description="1; half-length">
    <location>
        <begin position="184"/>
        <end position="190"/>
    </location>
</feature>
<feature type="repeat" description="2">
    <location>
        <begin position="191"/>
        <end position="198"/>
    </location>
</feature>
<feature type="repeat" description="3">
    <location>
        <begin position="199"/>
        <end position="206"/>
    </location>
</feature>
<feature type="region of interest" description="HBEAG" evidence="2">
    <location>
        <begin position="25"/>
        <end position="27"/>
    </location>
</feature>
<feature type="region of interest" description="Disordered" evidence="3">
    <location>
        <begin position="165"/>
        <end position="212"/>
    </location>
</feature>
<feature type="region of interest" description="3 X 8 AA repeats of S-P-R-R-R-R-S-Q">
    <location>
        <begin position="184"/>
        <end position="206"/>
    </location>
</feature>
<feature type="compositionally biased region" description="Basic residues" evidence="3">
    <location>
        <begin position="178"/>
        <end position="205"/>
    </location>
</feature>
<feature type="site" description="Cleavage; by host" evidence="2">
    <location>
        <begin position="183"/>
        <end position="184"/>
    </location>
</feature>
<feature type="disulfide bond" description="Interchain" evidence="2">
    <location>
        <position position="77"/>
    </location>
</feature>
<feature type="disulfide bond" description="Interchain" evidence="2">
    <location>
        <position position="90"/>
    </location>
</feature>
<accession>P89951</accession>
<gene>
    <name evidence="2" type="primary">C</name>
</gene>
<organism>
    <name type="scientific">Gibbon hepatitis B virus subtype ayw3q (isolate Hope)</name>
    <name type="common">HBVgbn</name>
    <dbReference type="NCBI Taxonomy" id="489544"/>
    <lineage>
        <taxon>Viruses</taxon>
        <taxon>Riboviria</taxon>
        <taxon>Pararnavirae</taxon>
        <taxon>Artverviricota</taxon>
        <taxon>Revtraviricetes</taxon>
        <taxon>Blubervirales</taxon>
        <taxon>Hepadnaviridae</taxon>
        <taxon>Orthohepadnavirus</taxon>
        <taxon>Hepatitis B virus</taxon>
    </lineage>
</organism>
<reference key="1">
    <citation type="journal article" date="1996" name="Virology">
        <title>Complete sequencing of a gibbon hepatitis B virus genome reveals a unique genotype distantly related to the chimpanzee hepatitis B virus.</title>
        <authorList>
            <person name="Norder H."/>
            <person name="Ebert J.W."/>
            <person name="Fields H.A."/>
            <person name="Mushahwar I.K."/>
            <person name="Magnius L.O."/>
        </authorList>
    </citation>
    <scope>NUCLEOTIDE SEQUENCE [GENOMIC DNA]</scope>
</reference>
<protein>
    <recommendedName>
        <fullName evidence="2">External core antigen</fullName>
    </recommendedName>
    <alternativeName>
        <fullName evidence="2">HBeAg</fullName>
    </alternativeName>
    <alternativeName>
        <fullName evidence="2">Precore protein</fullName>
    </alternativeName>
    <alternativeName>
        <fullName evidence="2">p25</fullName>
    </alternativeName>
</protein>
<keyword id="KW-0024">Alternative initiation</keyword>
<keyword id="KW-1015">Disulfide bond</keyword>
<keyword id="KW-1048">Host nucleus</keyword>
<keyword id="KW-0945">Host-virus interaction</keyword>
<keyword id="KW-0677">Repeat</keyword>
<keyword id="KW-0964">Secreted</keyword>
<keyword id="KW-0732">Signal</keyword>
<keyword id="KW-0899">Viral immunoevasion</keyword>
<sequence>MQLFHLCLIISCSCPTVQASKLCLGWLLGMDIDPYKEFGASVELLSFLPSDFFPSVRDLLDTASALYREALESPEHCSPNHTALRQAVLCWGELMTGCSWVGNNLEDPASRELVVNYVNTNMGLKIRQLLWFHISCLTFGRETVLEYLVSFGVWIRTPPAYRPPNAPILSTLPETTVVRRRGRSPRRRTPSPRRRRSQSPRRRRSQSPASQC</sequence>
<proteinExistence type="inferred from homology"/>
<name>HBEAG_HBVGB</name>
<dbReference type="EMBL" id="U46935">
    <property type="protein sequence ID" value="AAB41950.1"/>
    <property type="molecule type" value="Genomic_DNA"/>
</dbReference>
<dbReference type="PIR" id="S67504">
    <property type="entry name" value="S67504"/>
</dbReference>
<dbReference type="SMR" id="P89951"/>
<dbReference type="BindingDB" id="P89951"/>
<dbReference type="Proteomes" id="UP000007408">
    <property type="component" value="Genome"/>
</dbReference>
<dbReference type="GO" id="GO:0005576">
    <property type="term" value="C:extracellular region"/>
    <property type="evidence" value="ECO:0007669"/>
    <property type="project" value="UniProtKB-SubCell"/>
</dbReference>
<dbReference type="GO" id="GO:0043657">
    <property type="term" value="C:host cell"/>
    <property type="evidence" value="ECO:0007669"/>
    <property type="project" value="GOC"/>
</dbReference>
<dbReference type="GO" id="GO:0030430">
    <property type="term" value="C:host cell cytoplasm"/>
    <property type="evidence" value="ECO:0007669"/>
    <property type="project" value="UniProtKB-UniRule"/>
</dbReference>
<dbReference type="GO" id="GO:0042025">
    <property type="term" value="C:host cell nucleus"/>
    <property type="evidence" value="ECO:0007669"/>
    <property type="project" value="UniProtKB-SubCell"/>
</dbReference>
<dbReference type="GO" id="GO:0039619">
    <property type="term" value="C:T=4 icosahedral viral capsid"/>
    <property type="evidence" value="ECO:0007669"/>
    <property type="project" value="UniProtKB-UniRule"/>
</dbReference>
<dbReference type="GO" id="GO:0003677">
    <property type="term" value="F:DNA binding"/>
    <property type="evidence" value="ECO:0007669"/>
    <property type="project" value="UniProtKB-UniRule"/>
</dbReference>
<dbReference type="GO" id="GO:0003723">
    <property type="term" value="F:RNA binding"/>
    <property type="evidence" value="ECO:0007669"/>
    <property type="project" value="UniProtKB-UniRule"/>
</dbReference>
<dbReference type="GO" id="GO:0005198">
    <property type="term" value="F:structural molecule activity"/>
    <property type="evidence" value="ECO:0007669"/>
    <property type="project" value="UniProtKB-UniRule"/>
</dbReference>
<dbReference type="GO" id="GO:0075521">
    <property type="term" value="P:microtubule-dependent intracellular transport of viral material towards nucleus"/>
    <property type="evidence" value="ECO:0007669"/>
    <property type="project" value="UniProtKB-UniRule"/>
</dbReference>
<dbReference type="GO" id="GO:0046718">
    <property type="term" value="P:symbiont entry into host cell"/>
    <property type="evidence" value="ECO:0007669"/>
    <property type="project" value="UniProtKB-UniRule"/>
</dbReference>
<dbReference type="GO" id="GO:0075732">
    <property type="term" value="P:viral penetration into host nucleus"/>
    <property type="evidence" value="ECO:0007669"/>
    <property type="project" value="UniProtKB-UniRule"/>
</dbReference>
<dbReference type="FunFam" id="1.10.4090.10:FF:000001">
    <property type="entry name" value="Capsid protein"/>
    <property type="match status" value="1"/>
</dbReference>
<dbReference type="Gene3D" id="1.10.4090.10">
    <property type="entry name" value="Viral capsid, core domain supefamily, Hepatitis B virus"/>
    <property type="match status" value="1"/>
</dbReference>
<dbReference type="HAMAP" id="MF_04076">
    <property type="entry name" value="HBV_HBEAG"/>
    <property type="match status" value="1"/>
</dbReference>
<dbReference type="InterPro" id="IPR013195">
    <property type="entry name" value="Hepatitis_B_virus_capsid_N"/>
</dbReference>
<dbReference type="InterPro" id="IPR002006">
    <property type="entry name" value="Hepatitis_core"/>
</dbReference>
<dbReference type="InterPro" id="IPR036459">
    <property type="entry name" value="Viral_capsid_core_dom_sf_HBV"/>
</dbReference>
<dbReference type="Pfam" id="PF08290">
    <property type="entry name" value="Hep_core_N"/>
    <property type="match status" value="1"/>
</dbReference>
<dbReference type="Pfam" id="PF00906">
    <property type="entry name" value="Hepatitis_core"/>
    <property type="match status" value="3"/>
</dbReference>
<dbReference type="SUPFAM" id="SSF47852">
    <property type="entry name" value="Hepatitis B viral capsid (hbcag)"/>
    <property type="match status" value="1"/>
</dbReference>
<organismHost>
    <name type="scientific">Hylobatidae</name>
    <name type="common">gibbons</name>
    <dbReference type="NCBI Taxonomy" id="9577"/>
</organismHost>
<comment type="function">
    <text evidence="2">May regulate immune response to the intracellular capsid in acting as a T-cell tolerogen, by having an immunoregulatory effect which prevents destruction of infected cells by cytotoxic T-cells. This immune regulation may predispose to chronicity during perinatal infections and prevent severe liver injury during adult infections.</text>
</comment>
<comment type="subunit">
    <text evidence="2">Homodimerizes.</text>
</comment>
<comment type="subcellular location">
    <subcellularLocation>
        <location evidence="2">Secreted</location>
    </subcellularLocation>
    <subcellularLocation>
        <location evidence="2">Host nucleus</location>
    </subcellularLocation>
</comment>
<comment type="alternative products">
    <event type="alternative initiation"/>
    <isoform>
        <id>P89951-1</id>
        <name>External core antigen</name>
        <sequence type="displayed"/>
    </isoform>
    <isoform>
        <id>P0C6I8-1</id>
        <name>Capsid protein</name>
        <sequence type="external"/>
    </isoform>
</comment>
<comment type="PTM">
    <text evidence="2">Phosphorylated.</text>
</comment>
<comment type="PTM">
    <text evidence="2">Cleaved by host furin.</text>
</comment>
<comment type="similarity">
    <text evidence="2">Belongs to the orthohepadnavirus precore antigen family.</text>
</comment>
<evidence type="ECO:0000250" key="1"/>
<evidence type="ECO:0000255" key="2">
    <source>
        <dbReference type="HAMAP-Rule" id="MF_04076"/>
    </source>
</evidence>
<evidence type="ECO:0000256" key="3">
    <source>
        <dbReference type="SAM" id="MobiDB-lite"/>
    </source>
</evidence>